<evidence type="ECO:0000255" key="1">
    <source>
        <dbReference type="HAMAP-Rule" id="MF_00607"/>
    </source>
</evidence>
<proteinExistence type="inferred from homology"/>
<organism>
    <name type="scientific">Burkholderia lata (strain ATCC 17760 / DSM 23089 / LMG 22485 / NCIMB 9086 / R18194 / 383)</name>
    <dbReference type="NCBI Taxonomy" id="482957"/>
    <lineage>
        <taxon>Bacteria</taxon>
        <taxon>Pseudomonadati</taxon>
        <taxon>Pseudomonadota</taxon>
        <taxon>Betaproteobacteria</taxon>
        <taxon>Burkholderiales</taxon>
        <taxon>Burkholderiaceae</taxon>
        <taxon>Burkholderia</taxon>
        <taxon>Burkholderia cepacia complex</taxon>
    </lineage>
</organism>
<sequence>MSNSRQHQGHFARKRFGQNFLVDHGVIDSIVSTIGPARGQRMVEIGPGLGALTEPLIERLATPESPLHAVELDRDLIGRLQQRFGALLELHAGDALAFDFRSLAAPGDKPSLRIVGNLPYNISSPLLFHLMTFADAVIDQHFMLQNEVVERMVAEPGTKAFSRLSVMLQYRYVMEKMLDVPPESFQPPPKVDSAIVRMIPYEPHELPDVDPVLLGEVVTAAFSQRRKMLRNTLGDYRETIDFDALGFDLARRAEDVSVAEYVGVAQALAAVRKAG</sequence>
<comment type="function">
    <text evidence="1">Specifically dimethylates two adjacent adenosines (A1518 and A1519) in the loop of a conserved hairpin near the 3'-end of 16S rRNA in the 30S particle. May play a critical role in biogenesis of 30S subunits.</text>
</comment>
<comment type="catalytic activity">
    <reaction evidence="1">
        <text>adenosine(1518)/adenosine(1519) in 16S rRNA + 4 S-adenosyl-L-methionine = N(6)-dimethyladenosine(1518)/N(6)-dimethyladenosine(1519) in 16S rRNA + 4 S-adenosyl-L-homocysteine + 4 H(+)</text>
        <dbReference type="Rhea" id="RHEA:19609"/>
        <dbReference type="Rhea" id="RHEA-COMP:10232"/>
        <dbReference type="Rhea" id="RHEA-COMP:10233"/>
        <dbReference type="ChEBI" id="CHEBI:15378"/>
        <dbReference type="ChEBI" id="CHEBI:57856"/>
        <dbReference type="ChEBI" id="CHEBI:59789"/>
        <dbReference type="ChEBI" id="CHEBI:74411"/>
        <dbReference type="ChEBI" id="CHEBI:74493"/>
        <dbReference type="EC" id="2.1.1.182"/>
    </reaction>
</comment>
<comment type="subcellular location">
    <subcellularLocation>
        <location evidence="1">Cytoplasm</location>
    </subcellularLocation>
</comment>
<comment type="similarity">
    <text evidence="1">Belongs to the class I-like SAM-binding methyltransferase superfamily. rRNA adenine N(6)-methyltransferase family. RsmA subfamily.</text>
</comment>
<accession>Q39D37</accession>
<name>RSMA_BURL3</name>
<protein>
    <recommendedName>
        <fullName evidence="1">Ribosomal RNA small subunit methyltransferase A</fullName>
        <ecNumber evidence="1">2.1.1.182</ecNumber>
    </recommendedName>
    <alternativeName>
        <fullName evidence="1">16S rRNA (adenine(1518)-N(6)/adenine(1519)-N(6))-dimethyltransferase</fullName>
    </alternativeName>
    <alternativeName>
        <fullName evidence="1">16S rRNA dimethyladenosine transferase</fullName>
    </alternativeName>
    <alternativeName>
        <fullName evidence="1">16S rRNA dimethylase</fullName>
    </alternativeName>
    <alternativeName>
        <fullName evidence="1">S-adenosylmethionine-6-N', N'-adenosyl(rRNA) dimethyltransferase</fullName>
    </alternativeName>
</protein>
<dbReference type="EC" id="2.1.1.182" evidence="1"/>
<dbReference type="EMBL" id="CP000151">
    <property type="protein sequence ID" value="ABB09629.1"/>
    <property type="molecule type" value="Genomic_DNA"/>
</dbReference>
<dbReference type="RefSeq" id="WP_011353140.1">
    <property type="nucleotide sequence ID" value="NZ_WNDV01000023.1"/>
</dbReference>
<dbReference type="SMR" id="Q39D37"/>
<dbReference type="GeneID" id="45095918"/>
<dbReference type="KEGG" id="bur:Bcep18194_A6035"/>
<dbReference type="PATRIC" id="fig|482957.22.peg.3035"/>
<dbReference type="HOGENOM" id="CLU_041220_0_1_4"/>
<dbReference type="Proteomes" id="UP000002705">
    <property type="component" value="Chromosome 1"/>
</dbReference>
<dbReference type="GO" id="GO:0005829">
    <property type="term" value="C:cytosol"/>
    <property type="evidence" value="ECO:0007669"/>
    <property type="project" value="TreeGrafter"/>
</dbReference>
<dbReference type="GO" id="GO:0052908">
    <property type="term" value="F:16S rRNA (adenine(1518)-N(6)/adenine(1519)-N(6))-dimethyltransferase activity"/>
    <property type="evidence" value="ECO:0007669"/>
    <property type="project" value="UniProtKB-EC"/>
</dbReference>
<dbReference type="GO" id="GO:0003723">
    <property type="term" value="F:RNA binding"/>
    <property type="evidence" value="ECO:0007669"/>
    <property type="project" value="UniProtKB-KW"/>
</dbReference>
<dbReference type="FunFam" id="1.10.8.100:FF:000001">
    <property type="entry name" value="Ribosomal RNA small subunit methyltransferase A"/>
    <property type="match status" value="1"/>
</dbReference>
<dbReference type="Gene3D" id="1.10.8.100">
    <property type="entry name" value="Ribosomal RNA adenine dimethylase-like, domain 2"/>
    <property type="match status" value="1"/>
</dbReference>
<dbReference type="Gene3D" id="3.40.50.150">
    <property type="entry name" value="Vaccinia Virus protein VP39"/>
    <property type="match status" value="1"/>
</dbReference>
<dbReference type="HAMAP" id="MF_00607">
    <property type="entry name" value="16SrRNA_methyltr_A"/>
    <property type="match status" value="1"/>
</dbReference>
<dbReference type="InterPro" id="IPR001737">
    <property type="entry name" value="KsgA/Erm"/>
</dbReference>
<dbReference type="InterPro" id="IPR023165">
    <property type="entry name" value="rRNA_Ade_diMease-like_C"/>
</dbReference>
<dbReference type="InterPro" id="IPR020598">
    <property type="entry name" value="rRNA_Ade_methylase_Trfase_N"/>
</dbReference>
<dbReference type="InterPro" id="IPR011530">
    <property type="entry name" value="rRNA_adenine_dimethylase"/>
</dbReference>
<dbReference type="InterPro" id="IPR029063">
    <property type="entry name" value="SAM-dependent_MTases_sf"/>
</dbReference>
<dbReference type="NCBIfam" id="TIGR00755">
    <property type="entry name" value="ksgA"/>
    <property type="match status" value="1"/>
</dbReference>
<dbReference type="PANTHER" id="PTHR11727">
    <property type="entry name" value="DIMETHYLADENOSINE TRANSFERASE"/>
    <property type="match status" value="1"/>
</dbReference>
<dbReference type="PANTHER" id="PTHR11727:SF7">
    <property type="entry name" value="DIMETHYLADENOSINE TRANSFERASE-RELATED"/>
    <property type="match status" value="1"/>
</dbReference>
<dbReference type="Pfam" id="PF00398">
    <property type="entry name" value="RrnaAD"/>
    <property type="match status" value="1"/>
</dbReference>
<dbReference type="SMART" id="SM00650">
    <property type="entry name" value="rADc"/>
    <property type="match status" value="1"/>
</dbReference>
<dbReference type="SUPFAM" id="SSF53335">
    <property type="entry name" value="S-adenosyl-L-methionine-dependent methyltransferases"/>
    <property type="match status" value="1"/>
</dbReference>
<dbReference type="PROSITE" id="PS51689">
    <property type="entry name" value="SAM_RNA_A_N6_MT"/>
    <property type="match status" value="1"/>
</dbReference>
<gene>
    <name evidence="1" type="primary">rsmA</name>
    <name evidence="1" type="synonym">ksgA</name>
    <name type="ordered locus">Bcep18194_A6035</name>
</gene>
<feature type="chain" id="PRO_0000257384" description="Ribosomal RNA small subunit methyltransferase A">
    <location>
        <begin position="1"/>
        <end position="275"/>
    </location>
</feature>
<feature type="binding site" evidence="1">
    <location>
        <position position="19"/>
    </location>
    <ligand>
        <name>S-adenosyl-L-methionine</name>
        <dbReference type="ChEBI" id="CHEBI:59789"/>
    </ligand>
</feature>
<feature type="binding site" evidence="1">
    <location>
        <position position="21"/>
    </location>
    <ligand>
        <name>S-adenosyl-L-methionine</name>
        <dbReference type="ChEBI" id="CHEBI:59789"/>
    </ligand>
</feature>
<feature type="binding site" evidence="1">
    <location>
        <position position="46"/>
    </location>
    <ligand>
        <name>S-adenosyl-L-methionine</name>
        <dbReference type="ChEBI" id="CHEBI:59789"/>
    </ligand>
</feature>
<feature type="binding site" evidence="1">
    <location>
        <position position="71"/>
    </location>
    <ligand>
        <name>S-adenosyl-L-methionine</name>
        <dbReference type="ChEBI" id="CHEBI:59789"/>
    </ligand>
</feature>
<feature type="binding site" evidence="1">
    <location>
        <position position="94"/>
    </location>
    <ligand>
        <name>S-adenosyl-L-methionine</name>
        <dbReference type="ChEBI" id="CHEBI:59789"/>
    </ligand>
</feature>
<feature type="binding site" evidence="1">
    <location>
        <position position="117"/>
    </location>
    <ligand>
        <name>S-adenosyl-L-methionine</name>
        <dbReference type="ChEBI" id="CHEBI:59789"/>
    </ligand>
</feature>
<reference key="1">
    <citation type="submission" date="2005-10" db="EMBL/GenBank/DDBJ databases">
        <title>Complete sequence of chromosome 1 of Burkholderia sp. 383.</title>
        <authorList>
            <consortium name="US DOE Joint Genome Institute"/>
            <person name="Copeland A."/>
            <person name="Lucas S."/>
            <person name="Lapidus A."/>
            <person name="Barry K."/>
            <person name="Detter J.C."/>
            <person name="Glavina T."/>
            <person name="Hammon N."/>
            <person name="Israni S."/>
            <person name="Pitluck S."/>
            <person name="Chain P."/>
            <person name="Malfatti S."/>
            <person name="Shin M."/>
            <person name="Vergez L."/>
            <person name="Schmutz J."/>
            <person name="Larimer F."/>
            <person name="Land M."/>
            <person name="Kyrpides N."/>
            <person name="Lykidis A."/>
            <person name="Richardson P."/>
        </authorList>
    </citation>
    <scope>NUCLEOTIDE SEQUENCE [LARGE SCALE GENOMIC DNA]</scope>
    <source>
        <strain>ATCC 17760 / DSM 23089 / LMG 22485 / NCIMB 9086 / R18194 / 383</strain>
    </source>
</reference>
<keyword id="KW-0963">Cytoplasm</keyword>
<keyword id="KW-0489">Methyltransferase</keyword>
<keyword id="KW-0694">RNA-binding</keyword>
<keyword id="KW-0698">rRNA processing</keyword>
<keyword id="KW-0949">S-adenosyl-L-methionine</keyword>
<keyword id="KW-0808">Transferase</keyword>